<name>SYGB_SALPK</name>
<sequence length="689" mass="76483">MSEKTFLVEIGTEELPPKALRSLAESFAANFTAELDNAGLAHGNVEWFAAPRRLALKVANLAESQPDREVEKRGPAIAQAFDAEGKPSKAAEGWARGCGITVDQAERLKTDKGEWLLYRAHVKGESTEALVPNMVVTSLAKLPIPKLMRWGASDVHFVRPVHTVTLLLGDKVIPATILGIQSDRVIRGHRFMGEPEFTIDSAEQYPQILLERGKVIADYEARKAKIKADAEEAARKIGGNADLSESLLEEVASLVEWPVVLTAKFEEKFLAVPAEALVYTMKGDQKYFPVYDNAGKLLPNFIFVANIESKDPTQIISGNEKVVRPRLADAEFFFNTDRKKRLEDHLPRLQTVLFQQQLGTLRDKTDRIQALAGWIAGQIGADVNHATRAGLLSKCDLMTNMVFEFTDTQGVMGMHYARHDGEAEDVAVALNEQYQPRFAGDDLPSNPVACALAIADKMDTLAGIFGIGQHPKGDKDPFALRRAALGVLRIIVEKNLNLDLQTLTEEAARLYGDKLTNANVVDDVIDFMLGRFRAWYQDEGYTVDTIQAVLARRPTRPADFDARMKAVSHFRTLEEASALAAANKRVSNILAKATEPLNDIVHASVLKEAAEIELARHLVVLRDKLQPYFADGRYQEALIELAALRAPVDEFFENVMVNAEEKDIRINRLTLLSKLRELFLQVADISLLQ</sequence>
<dbReference type="EC" id="6.1.1.14" evidence="1"/>
<dbReference type="EMBL" id="FM200053">
    <property type="protein sequence ID" value="CAR61536.1"/>
    <property type="molecule type" value="Genomic_DNA"/>
</dbReference>
<dbReference type="RefSeq" id="WP_001291747.1">
    <property type="nucleotide sequence ID" value="NC_011147.1"/>
</dbReference>
<dbReference type="SMR" id="B5BHU1"/>
<dbReference type="KEGG" id="sek:SSPA3273"/>
<dbReference type="HOGENOM" id="CLU_007220_2_2_6"/>
<dbReference type="Proteomes" id="UP000001869">
    <property type="component" value="Chromosome"/>
</dbReference>
<dbReference type="GO" id="GO:0005829">
    <property type="term" value="C:cytosol"/>
    <property type="evidence" value="ECO:0007669"/>
    <property type="project" value="TreeGrafter"/>
</dbReference>
<dbReference type="GO" id="GO:0004814">
    <property type="term" value="F:arginine-tRNA ligase activity"/>
    <property type="evidence" value="ECO:0007669"/>
    <property type="project" value="InterPro"/>
</dbReference>
<dbReference type="GO" id="GO:0005524">
    <property type="term" value="F:ATP binding"/>
    <property type="evidence" value="ECO:0007669"/>
    <property type="project" value="UniProtKB-UniRule"/>
</dbReference>
<dbReference type="GO" id="GO:0004820">
    <property type="term" value="F:glycine-tRNA ligase activity"/>
    <property type="evidence" value="ECO:0007669"/>
    <property type="project" value="UniProtKB-UniRule"/>
</dbReference>
<dbReference type="GO" id="GO:0006420">
    <property type="term" value="P:arginyl-tRNA aminoacylation"/>
    <property type="evidence" value="ECO:0007669"/>
    <property type="project" value="InterPro"/>
</dbReference>
<dbReference type="GO" id="GO:0006426">
    <property type="term" value="P:glycyl-tRNA aminoacylation"/>
    <property type="evidence" value="ECO:0007669"/>
    <property type="project" value="UniProtKB-UniRule"/>
</dbReference>
<dbReference type="HAMAP" id="MF_00255">
    <property type="entry name" value="Gly_tRNA_synth_beta"/>
    <property type="match status" value="1"/>
</dbReference>
<dbReference type="InterPro" id="IPR008909">
    <property type="entry name" value="DALR_anticod-bd"/>
</dbReference>
<dbReference type="InterPro" id="IPR015944">
    <property type="entry name" value="Gly-tRNA-synth_bsu"/>
</dbReference>
<dbReference type="InterPro" id="IPR006194">
    <property type="entry name" value="Gly-tRNA-synth_heterodimer"/>
</dbReference>
<dbReference type="NCBIfam" id="TIGR00211">
    <property type="entry name" value="glyS"/>
    <property type="match status" value="1"/>
</dbReference>
<dbReference type="PANTHER" id="PTHR30075:SF2">
    <property type="entry name" value="GLYCINE--TRNA LIGASE, CHLOROPLASTIC_MITOCHONDRIAL 2"/>
    <property type="match status" value="1"/>
</dbReference>
<dbReference type="PANTHER" id="PTHR30075">
    <property type="entry name" value="GLYCYL-TRNA SYNTHETASE"/>
    <property type="match status" value="1"/>
</dbReference>
<dbReference type="Pfam" id="PF05746">
    <property type="entry name" value="DALR_1"/>
    <property type="match status" value="1"/>
</dbReference>
<dbReference type="Pfam" id="PF02092">
    <property type="entry name" value="tRNA_synt_2f"/>
    <property type="match status" value="1"/>
</dbReference>
<dbReference type="PRINTS" id="PR01045">
    <property type="entry name" value="TRNASYNTHGB"/>
</dbReference>
<dbReference type="SUPFAM" id="SSF109604">
    <property type="entry name" value="HD-domain/PDEase-like"/>
    <property type="match status" value="1"/>
</dbReference>
<dbReference type="PROSITE" id="PS50861">
    <property type="entry name" value="AA_TRNA_LIGASE_II_GLYAB"/>
    <property type="match status" value="1"/>
</dbReference>
<feature type="chain" id="PRO_1000101337" description="Glycine--tRNA ligase beta subunit">
    <location>
        <begin position="1"/>
        <end position="689"/>
    </location>
</feature>
<evidence type="ECO:0000255" key="1">
    <source>
        <dbReference type="HAMAP-Rule" id="MF_00255"/>
    </source>
</evidence>
<protein>
    <recommendedName>
        <fullName evidence="1">Glycine--tRNA ligase beta subunit</fullName>
        <ecNumber evidence="1">6.1.1.14</ecNumber>
    </recommendedName>
    <alternativeName>
        <fullName evidence="1">Glycyl-tRNA synthetase beta subunit</fullName>
        <shortName evidence="1">GlyRS</shortName>
    </alternativeName>
</protein>
<proteinExistence type="inferred from homology"/>
<gene>
    <name evidence="1" type="primary">glyS</name>
    <name type="ordered locus">SSPA3273</name>
</gene>
<organism>
    <name type="scientific">Salmonella paratyphi A (strain AKU_12601)</name>
    <dbReference type="NCBI Taxonomy" id="554290"/>
    <lineage>
        <taxon>Bacteria</taxon>
        <taxon>Pseudomonadati</taxon>
        <taxon>Pseudomonadota</taxon>
        <taxon>Gammaproteobacteria</taxon>
        <taxon>Enterobacterales</taxon>
        <taxon>Enterobacteriaceae</taxon>
        <taxon>Salmonella</taxon>
    </lineage>
</organism>
<accession>B5BHU1</accession>
<comment type="catalytic activity">
    <reaction evidence="1">
        <text>tRNA(Gly) + glycine + ATP = glycyl-tRNA(Gly) + AMP + diphosphate</text>
        <dbReference type="Rhea" id="RHEA:16013"/>
        <dbReference type="Rhea" id="RHEA-COMP:9664"/>
        <dbReference type="Rhea" id="RHEA-COMP:9683"/>
        <dbReference type="ChEBI" id="CHEBI:30616"/>
        <dbReference type="ChEBI" id="CHEBI:33019"/>
        <dbReference type="ChEBI" id="CHEBI:57305"/>
        <dbReference type="ChEBI" id="CHEBI:78442"/>
        <dbReference type="ChEBI" id="CHEBI:78522"/>
        <dbReference type="ChEBI" id="CHEBI:456215"/>
        <dbReference type="EC" id="6.1.1.14"/>
    </reaction>
</comment>
<comment type="subunit">
    <text evidence="1">Tetramer of two alpha and two beta subunits.</text>
</comment>
<comment type="subcellular location">
    <subcellularLocation>
        <location evidence="1">Cytoplasm</location>
    </subcellularLocation>
</comment>
<comment type="similarity">
    <text evidence="1">Belongs to the class-II aminoacyl-tRNA synthetase family.</text>
</comment>
<reference key="1">
    <citation type="journal article" date="2009" name="BMC Genomics">
        <title>Pseudogene accumulation in the evolutionary histories of Salmonella enterica serovars Paratyphi A and Typhi.</title>
        <authorList>
            <person name="Holt K.E."/>
            <person name="Thomson N.R."/>
            <person name="Wain J."/>
            <person name="Langridge G.C."/>
            <person name="Hasan R."/>
            <person name="Bhutta Z.A."/>
            <person name="Quail M.A."/>
            <person name="Norbertczak H."/>
            <person name="Walker D."/>
            <person name="Simmonds M."/>
            <person name="White B."/>
            <person name="Bason N."/>
            <person name="Mungall K."/>
            <person name="Dougan G."/>
            <person name="Parkhill J."/>
        </authorList>
    </citation>
    <scope>NUCLEOTIDE SEQUENCE [LARGE SCALE GENOMIC DNA]</scope>
    <source>
        <strain>AKU_12601</strain>
    </source>
</reference>
<keyword id="KW-0030">Aminoacyl-tRNA synthetase</keyword>
<keyword id="KW-0067">ATP-binding</keyword>
<keyword id="KW-0963">Cytoplasm</keyword>
<keyword id="KW-0436">Ligase</keyword>
<keyword id="KW-0547">Nucleotide-binding</keyword>
<keyword id="KW-0648">Protein biosynthesis</keyword>